<accession>G0SFB5</accession>
<name>YTM1_CHATD</name>
<feature type="chain" id="PRO_0000435844" description="Ribosome biogenesis protein YTM1">
    <location>
        <begin position="1"/>
        <end position="495"/>
    </location>
</feature>
<feature type="repeat" description="WD 1" evidence="2">
    <location>
        <begin position="129"/>
        <end position="168"/>
    </location>
</feature>
<feature type="repeat" description="WD 2" evidence="2">
    <location>
        <begin position="175"/>
        <end position="213"/>
    </location>
</feature>
<feature type="repeat" description="WD 3" evidence="2">
    <location>
        <begin position="223"/>
        <end position="262"/>
    </location>
</feature>
<feature type="repeat" description="WD 4" evidence="2">
    <location>
        <begin position="264"/>
        <end position="295"/>
    </location>
</feature>
<feature type="repeat" description="WD 5" evidence="2">
    <location>
        <begin position="296"/>
        <end position="337"/>
    </location>
</feature>
<feature type="repeat" description="WD 6" evidence="2">
    <location>
        <begin position="386"/>
        <end position="426"/>
    </location>
</feature>
<feature type="repeat" description="WD 7" evidence="2">
    <location>
        <begin position="458"/>
        <end position="495"/>
    </location>
</feature>
<feature type="region of interest" description="Ubiquitin-like (UBL) domain" evidence="2 5">
    <location>
        <begin position="15"/>
        <end position="97"/>
    </location>
</feature>
<feature type="strand" evidence="10">
    <location>
        <begin position="14"/>
        <end position="20"/>
    </location>
</feature>
<feature type="helix" evidence="10">
    <location>
        <begin position="24"/>
        <end position="26"/>
    </location>
</feature>
<feature type="helix" evidence="10">
    <location>
        <begin position="30"/>
        <end position="32"/>
    </location>
</feature>
<feature type="strand" evidence="10">
    <location>
        <begin position="33"/>
        <end position="38"/>
    </location>
</feature>
<feature type="helix" evidence="10">
    <location>
        <begin position="43"/>
        <end position="51"/>
    </location>
</feature>
<feature type="turn" evidence="10">
    <location>
        <begin position="53"/>
        <end position="56"/>
    </location>
</feature>
<feature type="strand" evidence="10">
    <location>
        <begin position="63"/>
        <end position="67"/>
    </location>
</feature>
<feature type="helix" evidence="10">
    <location>
        <begin position="76"/>
        <end position="82"/>
    </location>
</feature>
<feature type="strand" evidence="9">
    <location>
        <begin position="87"/>
        <end position="89"/>
    </location>
</feature>
<feature type="strand" evidence="10">
    <location>
        <begin position="91"/>
        <end position="97"/>
    </location>
</feature>
<feature type="strand" evidence="7">
    <location>
        <begin position="103"/>
        <end position="109"/>
    </location>
</feature>
<feature type="strand" evidence="7">
    <location>
        <begin position="114"/>
        <end position="120"/>
    </location>
</feature>
<feature type="strand" evidence="9">
    <location>
        <begin position="122"/>
        <end position="124"/>
    </location>
</feature>
<feature type="helix" evidence="7">
    <location>
        <begin position="125"/>
        <end position="131"/>
    </location>
</feature>
<feature type="strand" evidence="7">
    <location>
        <begin position="134"/>
        <end position="136"/>
    </location>
</feature>
<feature type="strand" evidence="7">
    <location>
        <begin position="145"/>
        <end position="150"/>
    </location>
</feature>
<feature type="strand" evidence="7">
    <location>
        <begin position="155"/>
        <end position="159"/>
    </location>
</feature>
<feature type="strand" evidence="7">
    <location>
        <begin position="164"/>
        <end position="167"/>
    </location>
</feature>
<feature type="helix" evidence="7">
    <location>
        <begin position="171"/>
        <end position="173"/>
    </location>
</feature>
<feature type="strand" evidence="8">
    <location>
        <begin position="176"/>
        <end position="178"/>
    </location>
</feature>
<feature type="strand" evidence="7">
    <location>
        <begin position="180"/>
        <end position="187"/>
    </location>
</feature>
<feature type="strand" evidence="7">
    <location>
        <begin position="190"/>
        <end position="195"/>
    </location>
</feature>
<feature type="strand" evidence="7">
    <location>
        <begin position="198"/>
        <end position="211"/>
    </location>
</feature>
<feature type="strand" evidence="7">
    <location>
        <begin position="213"/>
        <end position="222"/>
    </location>
</feature>
<feature type="strand" evidence="7">
    <location>
        <begin position="228"/>
        <end position="234"/>
    </location>
</feature>
<feature type="turn" evidence="7">
    <location>
        <begin position="235"/>
        <end position="238"/>
    </location>
</feature>
<feature type="strand" evidence="7">
    <location>
        <begin position="239"/>
        <end position="244"/>
    </location>
</feature>
<feature type="strand" evidence="7">
    <location>
        <begin position="249"/>
        <end position="253"/>
    </location>
</feature>
<feature type="turn" evidence="7">
    <location>
        <begin position="256"/>
        <end position="258"/>
    </location>
</feature>
<feature type="helix" evidence="7">
    <location>
        <begin position="264"/>
        <end position="266"/>
    </location>
</feature>
<feature type="strand" evidence="7">
    <location>
        <begin position="285"/>
        <end position="287"/>
    </location>
</feature>
<feature type="strand" evidence="7">
    <location>
        <begin position="290"/>
        <end position="293"/>
    </location>
</feature>
<feature type="strand" evidence="7">
    <location>
        <begin position="300"/>
        <end position="305"/>
    </location>
</feature>
<feature type="strand" evidence="7">
    <location>
        <begin position="312"/>
        <end position="317"/>
    </location>
</feature>
<feature type="strand" evidence="7">
    <location>
        <begin position="320"/>
        <end position="326"/>
    </location>
</feature>
<feature type="turn" evidence="7">
    <location>
        <begin position="327"/>
        <end position="329"/>
    </location>
</feature>
<feature type="strand" evidence="7">
    <location>
        <begin position="332"/>
        <end position="337"/>
    </location>
</feature>
<feature type="strand" evidence="7">
    <location>
        <begin position="342"/>
        <end position="348"/>
    </location>
</feature>
<feature type="strand" evidence="7">
    <location>
        <begin position="357"/>
        <end position="362"/>
    </location>
</feature>
<feature type="strand" evidence="7">
    <location>
        <begin position="367"/>
        <end position="370"/>
    </location>
</feature>
<feature type="strand" evidence="7">
    <location>
        <begin position="372"/>
        <end position="374"/>
    </location>
</feature>
<feature type="strand" evidence="7">
    <location>
        <begin position="382"/>
        <end position="384"/>
    </location>
</feature>
<feature type="strand" evidence="7">
    <location>
        <begin position="391"/>
        <end position="396"/>
    </location>
</feature>
<feature type="strand" evidence="7">
    <location>
        <begin position="401"/>
        <end position="408"/>
    </location>
</feature>
<feature type="strand" evidence="7">
    <location>
        <begin position="413"/>
        <end position="417"/>
    </location>
</feature>
<feature type="helix" evidence="7">
    <location>
        <begin position="426"/>
        <end position="428"/>
    </location>
</feature>
<feature type="strand" evidence="7">
    <location>
        <begin position="432"/>
        <end position="435"/>
    </location>
</feature>
<feature type="strand" evidence="7">
    <location>
        <begin position="437"/>
        <end position="441"/>
    </location>
</feature>
<feature type="helix" evidence="7">
    <location>
        <begin position="444"/>
        <end position="447"/>
    </location>
</feature>
<feature type="turn" evidence="7">
    <location>
        <begin position="448"/>
        <end position="450"/>
    </location>
</feature>
<feature type="helix" evidence="7">
    <location>
        <begin position="456"/>
        <end position="458"/>
    </location>
</feature>
<feature type="turn" evidence="7">
    <location>
        <begin position="459"/>
        <end position="461"/>
    </location>
</feature>
<feature type="strand" evidence="7">
    <location>
        <begin position="463"/>
        <end position="469"/>
    </location>
</feature>
<feature type="strand" evidence="7">
    <location>
        <begin position="472"/>
        <end position="477"/>
    </location>
</feature>
<feature type="strand" evidence="7">
    <location>
        <begin position="480"/>
        <end position="486"/>
    </location>
</feature>
<organism>
    <name type="scientific">Chaetomium thermophilum (strain DSM 1495 / CBS 144.50 / IMI 039719)</name>
    <name type="common">Thermochaetoides thermophila</name>
    <dbReference type="NCBI Taxonomy" id="759272"/>
    <lineage>
        <taxon>Eukaryota</taxon>
        <taxon>Fungi</taxon>
        <taxon>Dikarya</taxon>
        <taxon>Ascomycota</taxon>
        <taxon>Pezizomycotina</taxon>
        <taxon>Sordariomycetes</taxon>
        <taxon>Sordariomycetidae</taxon>
        <taxon>Sordariales</taxon>
        <taxon>Chaetomiaceae</taxon>
        <taxon>Thermochaetoides</taxon>
    </lineage>
</organism>
<protein>
    <recommendedName>
        <fullName evidence="2">Ribosome biogenesis protein YTM1</fullName>
    </recommendedName>
</protein>
<keyword id="KW-0002">3D-structure</keyword>
<keyword id="KW-0539">Nucleus</keyword>
<keyword id="KW-1185">Reference proteome</keyword>
<keyword id="KW-0677">Repeat</keyword>
<keyword id="KW-0690">Ribosome biogenesis</keyword>
<keyword id="KW-0698">rRNA processing</keyword>
<keyword id="KW-0853">WD repeat</keyword>
<comment type="function">
    <text evidence="2">Component of the NOP7 complex, which is required for maturation of the 25S and 5.8S ribosomal RNAs and formation of the 60S ribosome.</text>
</comment>
<comment type="subunit">
    <text evidence="1 2 3 4">Component of the NOP7 complex, composed of ERB1, NOP7 and YTM1. The complex is held together by ERB1, which interacts with NOP7 via its N-terminal domain and with YTM1 via a high-affinity interaction between the seven-bladed beta-propeller domains of the 2 proteins. The NOP7 complex associates with the 66S pre-ribosome (PubMed:26476442, PubMed:26657628). Interacts (via UBL domain) with MDN1 (via VWFA/MIDAS domain) (By similarity).</text>
</comment>
<comment type="subcellular location">
    <subcellularLocation>
        <location evidence="2">Nucleus</location>
        <location evidence="2">Nucleolus</location>
    </subcellularLocation>
    <subcellularLocation>
        <location evidence="2">Nucleus</location>
        <location evidence="2">Nucleoplasm</location>
    </subcellularLocation>
</comment>
<comment type="similarity">
    <text evidence="2">Belongs to the WD repeat WDR12/YTM1 family.</text>
</comment>
<dbReference type="EMBL" id="GL988046">
    <property type="protein sequence ID" value="EGS18131.1"/>
    <property type="molecule type" value="Genomic_DNA"/>
</dbReference>
<dbReference type="RefSeq" id="XP_006696462.1">
    <property type="nucleotide sequence ID" value="XM_006696399.1"/>
</dbReference>
<dbReference type="PDB" id="5CXB">
    <property type="method" value="X-ray"/>
    <property type="resolution" value="2.10 A"/>
    <property type="chains" value="A=1-495"/>
</dbReference>
<dbReference type="PDB" id="5CXC">
    <property type="method" value="X-ray"/>
    <property type="resolution" value="3.10 A"/>
    <property type="chains" value="A=1-495"/>
</dbReference>
<dbReference type="PDB" id="5CYK">
    <property type="method" value="X-ray"/>
    <property type="resolution" value="3.00 A"/>
    <property type="chains" value="A=1-495"/>
</dbReference>
<dbReference type="PDB" id="5EM2">
    <property type="method" value="X-ray"/>
    <property type="resolution" value="2.67 A"/>
    <property type="chains" value="B/D=1-495"/>
</dbReference>
<dbReference type="PDB" id="6QTB">
    <property type="method" value="X-ray"/>
    <property type="resolution" value="1.89 A"/>
    <property type="chains" value="B/E=8-98"/>
</dbReference>
<dbReference type="PDB" id="8I9X">
    <property type="method" value="EM"/>
    <property type="resolution" value="2.80 A"/>
    <property type="chains" value="CD=1-495"/>
</dbReference>
<dbReference type="PDB" id="8I9Y">
    <property type="method" value="EM"/>
    <property type="resolution" value="3.10 A"/>
    <property type="chains" value="CD=1-495"/>
</dbReference>
<dbReference type="PDB" id="8I9Z">
    <property type="method" value="EM"/>
    <property type="resolution" value="2.70 A"/>
    <property type="chains" value="CD=1-495"/>
</dbReference>
<dbReference type="PDB" id="8IA0">
    <property type="method" value="EM"/>
    <property type="resolution" value="2.70 A"/>
    <property type="chains" value="CD=1-495"/>
</dbReference>
<dbReference type="PDB" id="8PV2">
    <property type="method" value="EM"/>
    <property type="resolution" value="2.63 A"/>
    <property type="chains" value="CD=1-495"/>
</dbReference>
<dbReference type="PDBsum" id="5CXB"/>
<dbReference type="PDBsum" id="5CXC"/>
<dbReference type="PDBsum" id="5CYK"/>
<dbReference type="PDBsum" id="5EM2"/>
<dbReference type="PDBsum" id="6QTB"/>
<dbReference type="PDBsum" id="8I9X"/>
<dbReference type="PDBsum" id="8I9Y"/>
<dbReference type="PDBsum" id="8I9Z"/>
<dbReference type="PDBsum" id="8IA0"/>
<dbReference type="PDBsum" id="8PV2"/>
<dbReference type="EMDB" id="EMD-17951"/>
<dbReference type="EMDB" id="EMD-35287"/>
<dbReference type="EMDB" id="EMD-35288"/>
<dbReference type="EMDB" id="EMD-35289"/>
<dbReference type="EMDB" id="EMD-35290"/>
<dbReference type="SMR" id="G0SFB5"/>
<dbReference type="STRING" id="759272.G0SFB5"/>
<dbReference type="GeneID" id="18260184"/>
<dbReference type="KEGG" id="cthr:CTHT_0061460"/>
<dbReference type="eggNOG" id="KOG0313">
    <property type="taxonomic scope" value="Eukaryota"/>
</dbReference>
<dbReference type="HOGENOM" id="CLU_000288_57_0_1"/>
<dbReference type="OMA" id="DHKYVEF"/>
<dbReference type="OrthoDB" id="10251381at2759"/>
<dbReference type="EvolutionaryTrace" id="G0SFB5"/>
<dbReference type="Proteomes" id="UP000008066">
    <property type="component" value="Unassembled WGS sequence"/>
</dbReference>
<dbReference type="GO" id="GO:0005654">
    <property type="term" value="C:nucleoplasm"/>
    <property type="evidence" value="ECO:0007669"/>
    <property type="project" value="UniProtKB-SubCell"/>
</dbReference>
<dbReference type="GO" id="GO:0070545">
    <property type="term" value="C:PeBoW complex"/>
    <property type="evidence" value="ECO:0007669"/>
    <property type="project" value="TreeGrafter"/>
</dbReference>
<dbReference type="GO" id="GO:0030687">
    <property type="term" value="C:preribosome, large subunit precursor"/>
    <property type="evidence" value="ECO:0007669"/>
    <property type="project" value="UniProtKB-UniRule"/>
</dbReference>
<dbReference type="GO" id="GO:0043021">
    <property type="term" value="F:ribonucleoprotein complex binding"/>
    <property type="evidence" value="ECO:0007669"/>
    <property type="project" value="UniProtKB-UniRule"/>
</dbReference>
<dbReference type="GO" id="GO:0000466">
    <property type="term" value="P:maturation of 5.8S rRNA from tricistronic rRNA transcript (SSU-rRNA, 5.8S rRNA, LSU-rRNA)"/>
    <property type="evidence" value="ECO:0007669"/>
    <property type="project" value="UniProtKB-UniRule"/>
</dbReference>
<dbReference type="GO" id="GO:0000463">
    <property type="term" value="P:maturation of LSU-rRNA from tricistronic rRNA transcript (SSU-rRNA, 5.8S rRNA, LSU-rRNA)"/>
    <property type="evidence" value="ECO:0007669"/>
    <property type="project" value="UniProtKB-UniRule"/>
</dbReference>
<dbReference type="FunFam" id="2.130.10.10:FF:000593">
    <property type="entry name" value="Ribosome biogenesis protein ytm1"/>
    <property type="match status" value="1"/>
</dbReference>
<dbReference type="Gene3D" id="2.130.10.10">
    <property type="entry name" value="YVTN repeat-like/Quinoprotein amine dehydrogenase"/>
    <property type="match status" value="1"/>
</dbReference>
<dbReference type="HAMAP" id="MF_03029">
    <property type="entry name" value="WDR12"/>
    <property type="match status" value="1"/>
</dbReference>
<dbReference type="InterPro" id="IPR020472">
    <property type="entry name" value="G-protein_beta_WD-40_rep"/>
</dbReference>
<dbReference type="InterPro" id="IPR012972">
    <property type="entry name" value="NLE"/>
</dbReference>
<dbReference type="InterPro" id="IPR015943">
    <property type="entry name" value="WD40/YVTN_repeat-like_dom_sf"/>
</dbReference>
<dbReference type="InterPro" id="IPR019775">
    <property type="entry name" value="WD40_repeat_CS"/>
</dbReference>
<dbReference type="InterPro" id="IPR036322">
    <property type="entry name" value="WD40_repeat_dom_sf"/>
</dbReference>
<dbReference type="InterPro" id="IPR001680">
    <property type="entry name" value="WD40_rpt"/>
</dbReference>
<dbReference type="InterPro" id="IPR028599">
    <property type="entry name" value="WDR12/Ytm1"/>
</dbReference>
<dbReference type="PANTHER" id="PTHR19855:SF11">
    <property type="entry name" value="RIBOSOME BIOGENESIS PROTEIN WDR12"/>
    <property type="match status" value="1"/>
</dbReference>
<dbReference type="PANTHER" id="PTHR19855">
    <property type="entry name" value="WD40 REPEAT PROTEIN 12, 37"/>
    <property type="match status" value="1"/>
</dbReference>
<dbReference type="Pfam" id="PF08154">
    <property type="entry name" value="NLE"/>
    <property type="match status" value="1"/>
</dbReference>
<dbReference type="Pfam" id="PF00400">
    <property type="entry name" value="WD40"/>
    <property type="match status" value="4"/>
</dbReference>
<dbReference type="PRINTS" id="PR00320">
    <property type="entry name" value="GPROTEINBRPT"/>
</dbReference>
<dbReference type="SMART" id="SM00320">
    <property type="entry name" value="WD40"/>
    <property type="match status" value="6"/>
</dbReference>
<dbReference type="SUPFAM" id="SSF50978">
    <property type="entry name" value="WD40 repeat-like"/>
    <property type="match status" value="1"/>
</dbReference>
<dbReference type="PROSITE" id="PS00678">
    <property type="entry name" value="WD_REPEATS_1"/>
    <property type="match status" value="2"/>
</dbReference>
<dbReference type="PROSITE" id="PS50082">
    <property type="entry name" value="WD_REPEATS_2"/>
    <property type="match status" value="3"/>
</dbReference>
<dbReference type="PROSITE" id="PS50294">
    <property type="entry name" value="WD_REPEATS_REGION"/>
    <property type="match status" value="1"/>
</dbReference>
<reference key="1">
    <citation type="journal article" date="2011" name="Cell">
        <title>Insight into structure and assembly of the nuclear pore complex by utilizing the genome of a eukaryotic thermophile.</title>
        <authorList>
            <person name="Amlacher S."/>
            <person name="Sarges P."/>
            <person name="Flemming D."/>
            <person name="van Noort V."/>
            <person name="Kunze R."/>
            <person name="Devos D.P."/>
            <person name="Arumugam M."/>
            <person name="Bork P."/>
            <person name="Hurt E."/>
        </authorList>
    </citation>
    <scope>NUCLEOTIDE SEQUENCE [LARGE SCALE GENOMIC DNA]</scope>
    <source>
        <strain>DSM 1495 / CBS 144.50 / IMI 039719</strain>
    </source>
</reference>
<reference key="2">
    <citation type="journal article" date="2015" name="Nucleic Acids Res.">
        <title>The structure of Erb1-Ytm1 complex reveals the functional importance of a high-affinity binding between two beta-propellers during the assembly of large ribosomal subunits in eukaryotes.</title>
        <authorList>
            <person name="Wegrecki M."/>
            <person name="Rodriguez-Galan O."/>
            <person name="de la Cruz J."/>
            <person name="Bravo J."/>
        </authorList>
    </citation>
    <scope>X-RAY CRYSTALLOGRAPHY (2.10 ANGSTROMS) IN COMPLEX WITH ERB1</scope>
</reference>
<reference key="3">
    <citation type="journal article" date="2016" name="Nucleic Acids Res.">
        <title>Concerted removal of the Erb1-Ytm1 complex in ribosome biogenesis relies on an elaborate interface.</title>
        <authorList>
            <person name="Thoms M."/>
            <person name="Ahmed Y.L."/>
            <person name="Maddi K."/>
            <person name="Hurt E."/>
            <person name="Sinning I."/>
        </authorList>
    </citation>
    <scope>X-RAY CRYSTALLOGRAPHY (2.67 ANGSTROMS) IN COMPLEX WITH ERB1</scope>
</reference>
<gene>
    <name evidence="2" type="primary">YTM1</name>
    <name evidence="6" type="ORF">CTHT_0061460</name>
</gene>
<proteinExistence type="evidence at protein level"/>
<sequence length="495" mass="52939">MDAPMEDAPAPVAQVKVIFTTTEPDLELPESKRQLLVPADIRRYGLSRILNSESMLDTGSIPFDFLINGSFLRSSLEDYLTSNGLSLETTLTLQYVRSLIPPVYEASFEHDDWVSAVDVLSATSPAGRWSSAANSSAAVQPGQERVLSASYDGLLRIWNASGSVIATSPSGSHGGHTASIKAAKFLTSDRLASAGMDRTVRVWKYTESDHFTGELKPTLELYGHTGSVDWLDVDGHSKHILTASADGAIGFWSASKASAPEPDASLLPGAHVSKRRKATSSVSTAQRGPLGLWSIHTAPATAAIFDPRDRTVAYSASQDHTVRTLDLTTGQVVSTLTLTHPLLSLSALTRAGTTSPLLAAGTSARHITMVDPRASSATTSVMTLRGHANKVVSLSPSPENEYSLVSGSHDGTCRVWDLRSVRPATKEEGSLGGVSEPVYVIERESWASKGKKKRPVAGDGCKVFSVVWDKLGIFSGGEDKKVQVNRGRNIVTEQK</sequence>
<evidence type="ECO:0000250" key="1">
    <source>
        <dbReference type="UniProtKB" id="Q12024"/>
    </source>
</evidence>
<evidence type="ECO:0000255" key="2">
    <source>
        <dbReference type="HAMAP-Rule" id="MF_03029"/>
    </source>
</evidence>
<evidence type="ECO:0000269" key="3">
    <source>
    </source>
</evidence>
<evidence type="ECO:0000269" key="4">
    <source>
    </source>
</evidence>
<evidence type="ECO:0000305" key="5">
    <source>
    </source>
</evidence>
<evidence type="ECO:0000312" key="6">
    <source>
        <dbReference type="EMBL" id="EGS18131.1"/>
    </source>
</evidence>
<evidence type="ECO:0007829" key="7">
    <source>
        <dbReference type="PDB" id="5CXB"/>
    </source>
</evidence>
<evidence type="ECO:0007829" key="8">
    <source>
        <dbReference type="PDB" id="5CYK"/>
    </source>
</evidence>
<evidence type="ECO:0007829" key="9">
    <source>
        <dbReference type="PDB" id="5EM2"/>
    </source>
</evidence>
<evidence type="ECO:0007829" key="10">
    <source>
        <dbReference type="PDB" id="6QTB"/>
    </source>
</evidence>